<gene>
    <name evidence="1" type="primary">era</name>
    <name type="ordered locus">M6_Spy0415</name>
</gene>
<name>ERA_STRP6</name>
<organism>
    <name type="scientific">Streptococcus pyogenes serotype M6 (strain ATCC BAA-946 / MGAS10394)</name>
    <dbReference type="NCBI Taxonomy" id="286636"/>
    <lineage>
        <taxon>Bacteria</taxon>
        <taxon>Bacillati</taxon>
        <taxon>Bacillota</taxon>
        <taxon>Bacilli</taxon>
        <taxon>Lactobacillales</taxon>
        <taxon>Streptococcaceae</taxon>
        <taxon>Streptococcus</taxon>
    </lineage>
</organism>
<protein>
    <recommendedName>
        <fullName evidence="1">GTPase Era</fullName>
    </recommendedName>
</protein>
<keyword id="KW-1003">Cell membrane</keyword>
<keyword id="KW-0963">Cytoplasm</keyword>
<keyword id="KW-0342">GTP-binding</keyword>
<keyword id="KW-0472">Membrane</keyword>
<keyword id="KW-0547">Nucleotide-binding</keyword>
<keyword id="KW-0690">Ribosome biogenesis</keyword>
<keyword id="KW-0694">RNA-binding</keyword>
<keyword id="KW-0699">rRNA-binding</keyword>
<feature type="chain" id="PRO_0000180062" description="GTPase Era">
    <location>
        <begin position="1"/>
        <end position="298"/>
    </location>
</feature>
<feature type="domain" description="Era-type G" evidence="2">
    <location>
        <begin position="3"/>
        <end position="170"/>
    </location>
</feature>
<feature type="domain" description="KH type-2" evidence="1">
    <location>
        <begin position="201"/>
        <end position="279"/>
    </location>
</feature>
<feature type="region of interest" description="G1" evidence="2">
    <location>
        <begin position="11"/>
        <end position="18"/>
    </location>
</feature>
<feature type="region of interest" description="G2" evidence="2">
    <location>
        <begin position="37"/>
        <end position="41"/>
    </location>
</feature>
<feature type="region of interest" description="G3" evidence="2">
    <location>
        <begin position="58"/>
        <end position="61"/>
    </location>
</feature>
<feature type="region of interest" description="G4" evidence="2">
    <location>
        <begin position="120"/>
        <end position="123"/>
    </location>
</feature>
<feature type="region of interest" description="G5" evidence="2">
    <location>
        <begin position="149"/>
        <end position="151"/>
    </location>
</feature>
<feature type="binding site" evidence="1">
    <location>
        <begin position="11"/>
        <end position="18"/>
    </location>
    <ligand>
        <name>GTP</name>
        <dbReference type="ChEBI" id="CHEBI:37565"/>
    </ligand>
</feature>
<feature type="binding site" evidence="1">
    <location>
        <begin position="58"/>
        <end position="62"/>
    </location>
    <ligand>
        <name>GTP</name>
        <dbReference type="ChEBI" id="CHEBI:37565"/>
    </ligand>
</feature>
<feature type="binding site" evidence="1">
    <location>
        <begin position="120"/>
        <end position="123"/>
    </location>
    <ligand>
        <name>GTP</name>
        <dbReference type="ChEBI" id="CHEBI:37565"/>
    </ligand>
</feature>
<proteinExistence type="inferred from homology"/>
<accession>Q5XDG3</accession>
<comment type="function">
    <text evidence="1">An essential GTPase that binds both GDP and GTP, with rapid nucleotide exchange. Plays a role in 16S rRNA processing and 30S ribosomal subunit biogenesis and possibly also in cell cycle regulation and energy metabolism.</text>
</comment>
<comment type="subunit">
    <text evidence="1">Monomer.</text>
</comment>
<comment type="subcellular location">
    <subcellularLocation>
        <location>Cytoplasm</location>
    </subcellularLocation>
    <subcellularLocation>
        <location evidence="1">Cell membrane</location>
        <topology evidence="1">Peripheral membrane protein</topology>
    </subcellularLocation>
</comment>
<comment type="similarity">
    <text evidence="1 2">Belongs to the TRAFAC class TrmE-Era-EngA-EngB-Septin-like GTPase superfamily. Era GTPase family.</text>
</comment>
<dbReference type="EMBL" id="CP000003">
    <property type="protein sequence ID" value="AAT86550.1"/>
    <property type="molecule type" value="Genomic_DNA"/>
</dbReference>
<dbReference type="RefSeq" id="WP_002985743.1">
    <property type="nucleotide sequence ID" value="NC_006086.1"/>
</dbReference>
<dbReference type="SMR" id="Q5XDG3"/>
<dbReference type="GeneID" id="69901289"/>
<dbReference type="KEGG" id="spa:M6_Spy0415"/>
<dbReference type="HOGENOM" id="CLU_038009_1_0_9"/>
<dbReference type="Proteomes" id="UP000001167">
    <property type="component" value="Chromosome"/>
</dbReference>
<dbReference type="GO" id="GO:0005829">
    <property type="term" value="C:cytosol"/>
    <property type="evidence" value="ECO:0007669"/>
    <property type="project" value="TreeGrafter"/>
</dbReference>
<dbReference type="GO" id="GO:0005886">
    <property type="term" value="C:plasma membrane"/>
    <property type="evidence" value="ECO:0007669"/>
    <property type="project" value="UniProtKB-SubCell"/>
</dbReference>
<dbReference type="GO" id="GO:0005525">
    <property type="term" value="F:GTP binding"/>
    <property type="evidence" value="ECO:0007669"/>
    <property type="project" value="UniProtKB-UniRule"/>
</dbReference>
<dbReference type="GO" id="GO:0003924">
    <property type="term" value="F:GTPase activity"/>
    <property type="evidence" value="ECO:0007669"/>
    <property type="project" value="UniProtKB-UniRule"/>
</dbReference>
<dbReference type="GO" id="GO:0043024">
    <property type="term" value="F:ribosomal small subunit binding"/>
    <property type="evidence" value="ECO:0007669"/>
    <property type="project" value="TreeGrafter"/>
</dbReference>
<dbReference type="GO" id="GO:0070181">
    <property type="term" value="F:small ribosomal subunit rRNA binding"/>
    <property type="evidence" value="ECO:0007669"/>
    <property type="project" value="UniProtKB-UniRule"/>
</dbReference>
<dbReference type="GO" id="GO:0000028">
    <property type="term" value="P:ribosomal small subunit assembly"/>
    <property type="evidence" value="ECO:0007669"/>
    <property type="project" value="TreeGrafter"/>
</dbReference>
<dbReference type="CDD" id="cd04163">
    <property type="entry name" value="Era"/>
    <property type="match status" value="1"/>
</dbReference>
<dbReference type="CDD" id="cd22534">
    <property type="entry name" value="KH-II_Era"/>
    <property type="match status" value="1"/>
</dbReference>
<dbReference type="FunFam" id="3.30.300.20:FF:000003">
    <property type="entry name" value="GTPase Era"/>
    <property type="match status" value="1"/>
</dbReference>
<dbReference type="FunFam" id="3.40.50.300:FF:000094">
    <property type="entry name" value="GTPase Era"/>
    <property type="match status" value="1"/>
</dbReference>
<dbReference type="Gene3D" id="3.30.300.20">
    <property type="match status" value="1"/>
</dbReference>
<dbReference type="Gene3D" id="3.40.50.300">
    <property type="entry name" value="P-loop containing nucleotide triphosphate hydrolases"/>
    <property type="match status" value="1"/>
</dbReference>
<dbReference type="HAMAP" id="MF_00367">
    <property type="entry name" value="GTPase_Era"/>
    <property type="match status" value="1"/>
</dbReference>
<dbReference type="InterPro" id="IPR030388">
    <property type="entry name" value="G_ERA_dom"/>
</dbReference>
<dbReference type="InterPro" id="IPR006073">
    <property type="entry name" value="GTP-bd"/>
</dbReference>
<dbReference type="InterPro" id="IPR005662">
    <property type="entry name" value="GTPase_Era-like"/>
</dbReference>
<dbReference type="InterPro" id="IPR015946">
    <property type="entry name" value="KH_dom-like_a/b"/>
</dbReference>
<dbReference type="InterPro" id="IPR004044">
    <property type="entry name" value="KH_dom_type_2"/>
</dbReference>
<dbReference type="InterPro" id="IPR009019">
    <property type="entry name" value="KH_sf_prok-type"/>
</dbReference>
<dbReference type="InterPro" id="IPR027417">
    <property type="entry name" value="P-loop_NTPase"/>
</dbReference>
<dbReference type="InterPro" id="IPR005225">
    <property type="entry name" value="Small_GTP-bd"/>
</dbReference>
<dbReference type="NCBIfam" id="TIGR00436">
    <property type="entry name" value="era"/>
    <property type="match status" value="1"/>
</dbReference>
<dbReference type="NCBIfam" id="NF000908">
    <property type="entry name" value="PRK00089.1"/>
    <property type="match status" value="1"/>
</dbReference>
<dbReference type="NCBIfam" id="TIGR00231">
    <property type="entry name" value="small_GTP"/>
    <property type="match status" value="1"/>
</dbReference>
<dbReference type="PANTHER" id="PTHR42698">
    <property type="entry name" value="GTPASE ERA"/>
    <property type="match status" value="1"/>
</dbReference>
<dbReference type="PANTHER" id="PTHR42698:SF1">
    <property type="entry name" value="GTPASE ERA, MITOCHONDRIAL"/>
    <property type="match status" value="1"/>
</dbReference>
<dbReference type="Pfam" id="PF07650">
    <property type="entry name" value="KH_2"/>
    <property type="match status" value="1"/>
</dbReference>
<dbReference type="Pfam" id="PF01926">
    <property type="entry name" value="MMR_HSR1"/>
    <property type="match status" value="1"/>
</dbReference>
<dbReference type="SUPFAM" id="SSF52540">
    <property type="entry name" value="P-loop containing nucleoside triphosphate hydrolases"/>
    <property type="match status" value="1"/>
</dbReference>
<dbReference type="SUPFAM" id="SSF54814">
    <property type="entry name" value="Prokaryotic type KH domain (KH-domain type II)"/>
    <property type="match status" value="1"/>
</dbReference>
<dbReference type="PROSITE" id="PS51713">
    <property type="entry name" value="G_ERA"/>
    <property type="match status" value="1"/>
</dbReference>
<dbReference type="PROSITE" id="PS50823">
    <property type="entry name" value="KH_TYPE_2"/>
    <property type="match status" value="1"/>
</dbReference>
<sequence>MFKSGFVAILGRPNVGKSTFLNHVMGQKIAIMSDKAQTTRNKIMGIYTTETEQIVFIDTPGIHKPKTALGDFMVESAYSTLREVETVLFMVPADEKRGKGDDMIIERLKAAKIPVILVINKIDKVHPDQLLEQIDDFRSQMDFKEVVPISALEGNNVPTLIKLLTDNLEEGFQYFPEDQITDHPERFLVSEMVREKVLHLTQQEVPHSVAVVVESMKRDEETDKVHIRATIMVERDSQKGIIIGKQGAMLKKIGKMARRDIELMLGDKVYLETWVKVKKNWRDKKLDLADFGYNEKEY</sequence>
<reference key="1">
    <citation type="journal article" date="2004" name="J. Infect. Dis.">
        <title>Progress toward characterization of the group A Streptococcus metagenome: complete genome sequence of a macrolide-resistant serotype M6 strain.</title>
        <authorList>
            <person name="Banks D.J."/>
            <person name="Porcella S.F."/>
            <person name="Barbian K.D."/>
            <person name="Beres S.B."/>
            <person name="Philips L.E."/>
            <person name="Voyich J.M."/>
            <person name="DeLeo F.R."/>
            <person name="Martin J.M."/>
            <person name="Somerville G.A."/>
            <person name="Musser J.M."/>
        </authorList>
    </citation>
    <scope>NUCLEOTIDE SEQUENCE [LARGE SCALE GENOMIC DNA]</scope>
    <source>
        <strain>ATCC BAA-946 / MGAS10394</strain>
    </source>
</reference>
<evidence type="ECO:0000255" key="1">
    <source>
        <dbReference type="HAMAP-Rule" id="MF_00367"/>
    </source>
</evidence>
<evidence type="ECO:0000255" key="2">
    <source>
        <dbReference type="PROSITE-ProRule" id="PRU01050"/>
    </source>
</evidence>